<feature type="chain" id="PRO_0000119490" description="Glutamate--tRNA ligase">
    <location>
        <begin position="1"/>
        <end position="502"/>
    </location>
</feature>
<feature type="short sequence motif" description="'HIGH' region" evidence="1">
    <location>
        <begin position="9"/>
        <end position="19"/>
    </location>
</feature>
<feature type="short sequence motif" description="'KMSKS' region" evidence="1">
    <location>
        <begin position="250"/>
        <end position="254"/>
    </location>
</feature>
<feature type="binding site" evidence="1">
    <location>
        <position position="253"/>
    </location>
    <ligand>
        <name>ATP</name>
        <dbReference type="ChEBI" id="CHEBI:30616"/>
    </ligand>
</feature>
<evidence type="ECO:0000255" key="1">
    <source>
        <dbReference type="HAMAP-Rule" id="MF_00022"/>
    </source>
</evidence>
<proteinExistence type="inferred from homology"/>
<reference key="1">
    <citation type="journal article" date="2004" name="Nucleic Acids Res.">
        <title>Unique features revealed by the genome sequence of Acinetobacter sp. ADP1, a versatile and naturally transformation competent bacterium.</title>
        <authorList>
            <person name="Barbe V."/>
            <person name="Vallenet D."/>
            <person name="Fonknechten N."/>
            <person name="Kreimeyer A."/>
            <person name="Oztas S."/>
            <person name="Labarre L."/>
            <person name="Cruveiller S."/>
            <person name="Robert C."/>
            <person name="Duprat S."/>
            <person name="Wincker P."/>
            <person name="Ornston L.N."/>
            <person name="Weissenbach J."/>
            <person name="Marliere P."/>
            <person name="Cohen G.N."/>
            <person name="Medigue C."/>
        </authorList>
    </citation>
    <scope>NUCLEOTIDE SEQUENCE [LARGE SCALE GENOMIC DNA]</scope>
    <source>
        <strain>ATCC 33305 / BD413 / ADP1</strain>
    </source>
</reference>
<name>SYE_ACIAD</name>
<gene>
    <name evidence="1" type="primary">gltX</name>
    <name type="ordered locus">ACIAD3371</name>
</gene>
<protein>
    <recommendedName>
        <fullName evidence="1">Glutamate--tRNA ligase</fullName>
        <ecNumber evidence="1">6.1.1.17</ecNumber>
    </recommendedName>
    <alternativeName>
        <fullName evidence="1">Glutamyl-tRNA synthetase</fullName>
        <shortName evidence="1">GluRS</shortName>
    </alternativeName>
</protein>
<keyword id="KW-0030">Aminoacyl-tRNA synthetase</keyword>
<keyword id="KW-0067">ATP-binding</keyword>
<keyword id="KW-0963">Cytoplasm</keyword>
<keyword id="KW-0436">Ligase</keyword>
<keyword id="KW-0547">Nucleotide-binding</keyword>
<keyword id="KW-0648">Protein biosynthesis</keyword>
<accession>Q6F7C8</accession>
<sequence>MKVRTRIAPSPTGFPHVGTAYIALFNLCFAKQHGGEFILRIEDTDQLRSTPESEQMILDSLRWLGLNWSEGPDVGGPHAPYRQSERMGIYKQYALDLIEKGHAFYCFATAEELDQMRAEQQARGETPKYDGRGLKLSQEEVERRLAAGEPHVIRMKVPEEGICKFNDLLRGEVEIPWAQVDMQVLLKTDGLPTYHLANVVDDHLMEITHVLRGEEWLPSAPKHQLLYQYFGWDMPTLCHMPLLRNPDKSKLSKRKNPTSINYYRDIGVLPEALLNYLGRMGWSMPDEREVFTLTDMIEHFDIQRVSLGGPIFDVDKLNWLNGQWIKSLTPGQLLDRLLSWKSDRQTLEDIATAIQPRINLLSEAVNWAGFYFNHMPNITAEMFESKKLSPEQVRQSLQFAIWRLESQFTWNNETVSQILMDLANQMDIKLRDFMPAFFIAIAGSTSSTPVMQSMVTIGPDLTFARLRRALEIVGAPSKKELKVWEKLNESLKLPKNETVDNT</sequence>
<dbReference type="EC" id="6.1.1.17" evidence="1"/>
<dbReference type="EMBL" id="CR543861">
    <property type="protein sequence ID" value="CAG70037.1"/>
    <property type="molecule type" value="Genomic_DNA"/>
</dbReference>
<dbReference type="RefSeq" id="WP_004923679.1">
    <property type="nucleotide sequence ID" value="NC_005966.1"/>
</dbReference>
<dbReference type="SMR" id="Q6F7C8"/>
<dbReference type="STRING" id="202950.GCA_001485005_02209"/>
<dbReference type="GeneID" id="45235565"/>
<dbReference type="KEGG" id="aci:ACIAD3371"/>
<dbReference type="eggNOG" id="COG0008">
    <property type="taxonomic scope" value="Bacteria"/>
</dbReference>
<dbReference type="HOGENOM" id="CLU_015768_6_3_6"/>
<dbReference type="OrthoDB" id="9807503at2"/>
<dbReference type="BioCyc" id="ASP62977:ACIAD_RS15250-MONOMER"/>
<dbReference type="Proteomes" id="UP000000430">
    <property type="component" value="Chromosome"/>
</dbReference>
<dbReference type="GO" id="GO:0005829">
    <property type="term" value="C:cytosol"/>
    <property type="evidence" value="ECO:0007669"/>
    <property type="project" value="TreeGrafter"/>
</dbReference>
<dbReference type="GO" id="GO:0005524">
    <property type="term" value="F:ATP binding"/>
    <property type="evidence" value="ECO:0007669"/>
    <property type="project" value="UniProtKB-UniRule"/>
</dbReference>
<dbReference type="GO" id="GO:0004818">
    <property type="term" value="F:glutamate-tRNA ligase activity"/>
    <property type="evidence" value="ECO:0007669"/>
    <property type="project" value="UniProtKB-UniRule"/>
</dbReference>
<dbReference type="GO" id="GO:0000049">
    <property type="term" value="F:tRNA binding"/>
    <property type="evidence" value="ECO:0007669"/>
    <property type="project" value="InterPro"/>
</dbReference>
<dbReference type="GO" id="GO:0008270">
    <property type="term" value="F:zinc ion binding"/>
    <property type="evidence" value="ECO:0007669"/>
    <property type="project" value="InterPro"/>
</dbReference>
<dbReference type="GO" id="GO:0006424">
    <property type="term" value="P:glutamyl-tRNA aminoacylation"/>
    <property type="evidence" value="ECO:0007669"/>
    <property type="project" value="UniProtKB-UniRule"/>
</dbReference>
<dbReference type="CDD" id="cd00808">
    <property type="entry name" value="GluRS_core"/>
    <property type="match status" value="1"/>
</dbReference>
<dbReference type="FunFam" id="3.40.50.620:FF:000045">
    <property type="entry name" value="Glutamate--tRNA ligase, mitochondrial"/>
    <property type="match status" value="1"/>
</dbReference>
<dbReference type="Gene3D" id="1.10.10.350">
    <property type="match status" value="1"/>
</dbReference>
<dbReference type="Gene3D" id="3.40.50.620">
    <property type="entry name" value="HUPs"/>
    <property type="match status" value="1"/>
</dbReference>
<dbReference type="HAMAP" id="MF_00022">
    <property type="entry name" value="Glu_tRNA_synth_type1"/>
    <property type="match status" value="1"/>
</dbReference>
<dbReference type="InterPro" id="IPR045462">
    <property type="entry name" value="aa-tRNA-synth_I_cd-bd"/>
</dbReference>
<dbReference type="InterPro" id="IPR020751">
    <property type="entry name" value="aa-tRNA-synth_I_codon-bd_sub2"/>
</dbReference>
<dbReference type="InterPro" id="IPR001412">
    <property type="entry name" value="aa-tRNA-synth_I_CS"/>
</dbReference>
<dbReference type="InterPro" id="IPR008925">
    <property type="entry name" value="aa_tRNA-synth_I_cd-bd_sf"/>
</dbReference>
<dbReference type="InterPro" id="IPR004527">
    <property type="entry name" value="Glu-tRNA-ligase_bac/mito"/>
</dbReference>
<dbReference type="InterPro" id="IPR000924">
    <property type="entry name" value="Glu/Gln-tRNA-synth"/>
</dbReference>
<dbReference type="InterPro" id="IPR020058">
    <property type="entry name" value="Glu/Gln-tRNA-synth_Ib_cat-dom"/>
</dbReference>
<dbReference type="InterPro" id="IPR049940">
    <property type="entry name" value="GluQ/Sye"/>
</dbReference>
<dbReference type="InterPro" id="IPR033910">
    <property type="entry name" value="GluRS_core"/>
</dbReference>
<dbReference type="InterPro" id="IPR014729">
    <property type="entry name" value="Rossmann-like_a/b/a_fold"/>
</dbReference>
<dbReference type="NCBIfam" id="TIGR00464">
    <property type="entry name" value="gltX_bact"/>
    <property type="match status" value="1"/>
</dbReference>
<dbReference type="PANTHER" id="PTHR43311">
    <property type="entry name" value="GLUTAMATE--TRNA LIGASE"/>
    <property type="match status" value="1"/>
</dbReference>
<dbReference type="PANTHER" id="PTHR43311:SF2">
    <property type="entry name" value="GLUTAMATE--TRNA LIGASE, MITOCHONDRIAL-RELATED"/>
    <property type="match status" value="1"/>
</dbReference>
<dbReference type="Pfam" id="PF19269">
    <property type="entry name" value="Anticodon_2"/>
    <property type="match status" value="1"/>
</dbReference>
<dbReference type="Pfam" id="PF00749">
    <property type="entry name" value="tRNA-synt_1c"/>
    <property type="match status" value="1"/>
</dbReference>
<dbReference type="PRINTS" id="PR00987">
    <property type="entry name" value="TRNASYNTHGLU"/>
</dbReference>
<dbReference type="SUPFAM" id="SSF48163">
    <property type="entry name" value="An anticodon-binding domain of class I aminoacyl-tRNA synthetases"/>
    <property type="match status" value="1"/>
</dbReference>
<dbReference type="SUPFAM" id="SSF52374">
    <property type="entry name" value="Nucleotidylyl transferase"/>
    <property type="match status" value="1"/>
</dbReference>
<dbReference type="PROSITE" id="PS00178">
    <property type="entry name" value="AA_TRNA_LIGASE_I"/>
    <property type="match status" value="1"/>
</dbReference>
<comment type="function">
    <text evidence="1">Catalyzes the attachment of glutamate to tRNA(Glu) in a two-step reaction: glutamate is first activated by ATP to form Glu-AMP and then transferred to the acceptor end of tRNA(Glu).</text>
</comment>
<comment type="catalytic activity">
    <reaction evidence="1">
        <text>tRNA(Glu) + L-glutamate + ATP = L-glutamyl-tRNA(Glu) + AMP + diphosphate</text>
        <dbReference type="Rhea" id="RHEA:23540"/>
        <dbReference type="Rhea" id="RHEA-COMP:9663"/>
        <dbReference type="Rhea" id="RHEA-COMP:9680"/>
        <dbReference type="ChEBI" id="CHEBI:29985"/>
        <dbReference type="ChEBI" id="CHEBI:30616"/>
        <dbReference type="ChEBI" id="CHEBI:33019"/>
        <dbReference type="ChEBI" id="CHEBI:78442"/>
        <dbReference type="ChEBI" id="CHEBI:78520"/>
        <dbReference type="ChEBI" id="CHEBI:456215"/>
        <dbReference type="EC" id="6.1.1.17"/>
    </reaction>
</comment>
<comment type="subunit">
    <text evidence="1">Monomer.</text>
</comment>
<comment type="subcellular location">
    <subcellularLocation>
        <location evidence="1">Cytoplasm</location>
    </subcellularLocation>
</comment>
<comment type="similarity">
    <text evidence="1">Belongs to the class-I aminoacyl-tRNA synthetase family. Glutamate--tRNA ligase type 1 subfamily.</text>
</comment>
<organism>
    <name type="scientific">Acinetobacter baylyi (strain ATCC 33305 / BD413 / ADP1)</name>
    <dbReference type="NCBI Taxonomy" id="62977"/>
    <lineage>
        <taxon>Bacteria</taxon>
        <taxon>Pseudomonadati</taxon>
        <taxon>Pseudomonadota</taxon>
        <taxon>Gammaproteobacteria</taxon>
        <taxon>Moraxellales</taxon>
        <taxon>Moraxellaceae</taxon>
        <taxon>Acinetobacter</taxon>
    </lineage>
</organism>